<keyword id="KW-0028">Amino-acid biosynthesis</keyword>
<keyword id="KW-0963">Cytoplasm</keyword>
<keyword id="KW-0368">Histidine biosynthesis</keyword>
<keyword id="KW-0456">Lyase</keyword>
<keyword id="KW-1185">Reference proteome</keyword>
<sequence>MTEPNRVAEVRRDTAETKIRVRVDLDGTGVARLATGIGFFDHMLDQLARHGLVDLEIEADGDLHIDGHHTVEDVGITLGQAFAKAVGDKKGLRRYGHAYVPLDEALSRVVVDFSGRPGLHMRVPFKAGMIGALDTQLVYEFFQGFVNHAGVTLHIDNLHGDNAHHQCETVFKAFARALRMALERDPRMAGVIPSTKGSL</sequence>
<accession>A2SE06</accession>
<evidence type="ECO:0000255" key="1">
    <source>
        <dbReference type="HAMAP-Rule" id="MF_00076"/>
    </source>
</evidence>
<feature type="chain" id="PRO_0000336320" description="Imidazoleglycerol-phosphate dehydratase">
    <location>
        <begin position="1"/>
        <end position="199"/>
    </location>
</feature>
<gene>
    <name evidence="1" type="primary">hisB</name>
    <name type="ordered locus">Mpe_A0833</name>
</gene>
<name>HIS7_METPP</name>
<organism>
    <name type="scientific">Methylibium petroleiphilum (strain ATCC BAA-1232 / LMG 22953 / PM1)</name>
    <dbReference type="NCBI Taxonomy" id="420662"/>
    <lineage>
        <taxon>Bacteria</taxon>
        <taxon>Pseudomonadati</taxon>
        <taxon>Pseudomonadota</taxon>
        <taxon>Betaproteobacteria</taxon>
        <taxon>Burkholderiales</taxon>
        <taxon>Sphaerotilaceae</taxon>
        <taxon>Methylibium</taxon>
    </lineage>
</organism>
<proteinExistence type="inferred from homology"/>
<comment type="catalytic activity">
    <reaction evidence="1">
        <text>D-erythro-1-(imidazol-4-yl)glycerol 3-phosphate = 3-(imidazol-4-yl)-2-oxopropyl phosphate + H2O</text>
        <dbReference type="Rhea" id="RHEA:11040"/>
        <dbReference type="ChEBI" id="CHEBI:15377"/>
        <dbReference type="ChEBI" id="CHEBI:57766"/>
        <dbReference type="ChEBI" id="CHEBI:58278"/>
        <dbReference type="EC" id="4.2.1.19"/>
    </reaction>
</comment>
<comment type="pathway">
    <text evidence="1">Amino-acid biosynthesis; L-histidine biosynthesis; L-histidine from 5-phospho-alpha-D-ribose 1-diphosphate: step 6/9.</text>
</comment>
<comment type="subcellular location">
    <subcellularLocation>
        <location evidence="1">Cytoplasm</location>
    </subcellularLocation>
</comment>
<comment type="similarity">
    <text evidence="1">Belongs to the imidazoleglycerol-phosphate dehydratase family.</text>
</comment>
<protein>
    <recommendedName>
        <fullName evidence="1">Imidazoleglycerol-phosphate dehydratase</fullName>
        <shortName evidence="1">IGPD</shortName>
        <ecNumber evidence="1">4.2.1.19</ecNumber>
    </recommendedName>
</protein>
<dbReference type="EC" id="4.2.1.19" evidence="1"/>
<dbReference type="EMBL" id="CP000555">
    <property type="protein sequence ID" value="ABM93795.1"/>
    <property type="molecule type" value="Genomic_DNA"/>
</dbReference>
<dbReference type="RefSeq" id="WP_011828433.1">
    <property type="nucleotide sequence ID" value="NC_008825.1"/>
</dbReference>
<dbReference type="SMR" id="A2SE06"/>
<dbReference type="STRING" id="420662.Mpe_A0833"/>
<dbReference type="KEGG" id="mpt:Mpe_A0833"/>
<dbReference type="eggNOG" id="COG0131">
    <property type="taxonomic scope" value="Bacteria"/>
</dbReference>
<dbReference type="HOGENOM" id="CLU_044308_3_0_4"/>
<dbReference type="UniPathway" id="UPA00031">
    <property type="reaction ID" value="UER00011"/>
</dbReference>
<dbReference type="Proteomes" id="UP000000366">
    <property type="component" value="Chromosome"/>
</dbReference>
<dbReference type="GO" id="GO:0005737">
    <property type="term" value="C:cytoplasm"/>
    <property type="evidence" value="ECO:0007669"/>
    <property type="project" value="UniProtKB-SubCell"/>
</dbReference>
<dbReference type="GO" id="GO:0004424">
    <property type="term" value="F:imidazoleglycerol-phosphate dehydratase activity"/>
    <property type="evidence" value="ECO:0007669"/>
    <property type="project" value="UniProtKB-UniRule"/>
</dbReference>
<dbReference type="GO" id="GO:0000105">
    <property type="term" value="P:L-histidine biosynthetic process"/>
    <property type="evidence" value="ECO:0007669"/>
    <property type="project" value="UniProtKB-UniRule"/>
</dbReference>
<dbReference type="CDD" id="cd07914">
    <property type="entry name" value="IGPD"/>
    <property type="match status" value="1"/>
</dbReference>
<dbReference type="FunFam" id="3.30.230.40:FF:000002">
    <property type="entry name" value="Imidazoleglycerol-phosphate dehydratase"/>
    <property type="match status" value="1"/>
</dbReference>
<dbReference type="FunFam" id="3.30.230.40:FF:000003">
    <property type="entry name" value="Imidazoleglycerol-phosphate dehydratase HisB"/>
    <property type="match status" value="1"/>
</dbReference>
<dbReference type="Gene3D" id="3.30.230.40">
    <property type="entry name" value="Imidazole glycerol phosphate dehydratase, domain 1"/>
    <property type="match status" value="2"/>
</dbReference>
<dbReference type="HAMAP" id="MF_00076">
    <property type="entry name" value="HisB"/>
    <property type="match status" value="1"/>
</dbReference>
<dbReference type="InterPro" id="IPR038494">
    <property type="entry name" value="IGPD_sf"/>
</dbReference>
<dbReference type="InterPro" id="IPR000807">
    <property type="entry name" value="ImidazoleglycerolP_deHydtase"/>
</dbReference>
<dbReference type="InterPro" id="IPR020565">
    <property type="entry name" value="ImidazoleglycerP_deHydtase_CS"/>
</dbReference>
<dbReference type="InterPro" id="IPR020568">
    <property type="entry name" value="Ribosomal_Su5_D2-typ_SF"/>
</dbReference>
<dbReference type="NCBIfam" id="NF002106">
    <property type="entry name" value="PRK00951.1-1"/>
    <property type="match status" value="1"/>
</dbReference>
<dbReference type="NCBIfam" id="NF002109">
    <property type="entry name" value="PRK00951.1-5"/>
    <property type="match status" value="1"/>
</dbReference>
<dbReference type="NCBIfam" id="NF002111">
    <property type="entry name" value="PRK00951.2-1"/>
    <property type="match status" value="1"/>
</dbReference>
<dbReference type="NCBIfam" id="NF002114">
    <property type="entry name" value="PRK00951.2-4"/>
    <property type="match status" value="1"/>
</dbReference>
<dbReference type="PANTHER" id="PTHR23133:SF2">
    <property type="entry name" value="IMIDAZOLEGLYCEROL-PHOSPHATE DEHYDRATASE"/>
    <property type="match status" value="1"/>
</dbReference>
<dbReference type="PANTHER" id="PTHR23133">
    <property type="entry name" value="IMIDAZOLEGLYCEROL-PHOSPHATE DEHYDRATASE HIS7"/>
    <property type="match status" value="1"/>
</dbReference>
<dbReference type="Pfam" id="PF00475">
    <property type="entry name" value="IGPD"/>
    <property type="match status" value="1"/>
</dbReference>
<dbReference type="SUPFAM" id="SSF54211">
    <property type="entry name" value="Ribosomal protein S5 domain 2-like"/>
    <property type="match status" value="2"/>
</dbReference>
<dbReference type="PROSITE" id="PS00954">
    <property type="entry name" value="IGP_DEHYDRATASE_1"/>
    <property type="match status" value="1"/>
</dbReference>
<dbReference type="PROSITE" id="PS00955">
    <property type="entry name" value="IGP_DEHYDRATASE_2"/>
    <property type="match status" value="1"/>
</dbReference>
<reference key="1">
    <citation type="journal article" date="2007" name="J. Bacteriol.">
        <title>Whole-genome analysis of the methyl tert-butyl ether-degrading beta-proteobacterium Methylibium petroleiphilum PM1.</title>
        <authorList>
            <person name="Kane S.R."/>
            <person name="Chakicherla A.Y."/>
            <person name="Chain P.S.G."/>
            <person name="Schmidt R."/>
            <person name="Shin M.W."/>
            <person name="Legler T.C."/>
            <person name="Scow K.M."/>
            <person name="Larimer F.W."/>
            <person name="Lucas S.M."/>
            <person name="Richardson P.M."/>
            <person name="Hristova K.R."/>
        </authorList>
    </citation>
    <scope>NUCLEOTIDE SEQUENCE [LARGE SCALE GENOMIC DNA]</scope>
    <source>
        <strain>ATCC BAA-1232 / LMG 22953 / PM1</strain>
    </source>
</reference>